<keyword id="KW-0378">Hydrolase</keyword>
<keyword id="KW-1185">Reference proteome</keyword>
<keyword id="KW-0677">Repeat</keyword>
<keyword id="KW-0732">Signal</keyword>
<keyword id="KW-0843">Virulence</keyword>
<comment type="function">
    <text evidence="1">Factor that stimulates resuscitation of dormant cells. Has peptidoglycan (PG) hydrolytic activity (By similarity).</text>
</comment>
<comment type="similarity">
    <text evidence="4">Belongs to the transglycosylase family. Rpf subfamily.</text>
</comment>
<evidence type="ECO:0000250" key="1"/>
<evidence type="ECO:0000255" key="2"/>
<evidence type="ECO:0000256" key="3">
    <source>
        <dbReference type="SAM" id="MobiDB-lite"/>
    </source>
</evidence>
<evidence type="ECO:0000305" key="4"/>
<organism>
    <name type="scientific">Mycobacterium tuberculosis (strain CDC 1551 / Oshkosh)</name>
    <dbReference type="NCBI Taxonomy" id="83331"/>
    <lineage>
        <taxon>Bacteria</taxon>
        <taxon>Bacillati</taxon>
        <taxon>Actinomycetota</taxon>
        <taxon>Actinomycetes</taxon>
        <taxon>Mycobacteriales</taxon>
        <taxon>Mycobacteriaceae</taxon>
        <taxon>Mycobacterium</taxon>
        <taxon>Mycobacterium tuberculosis complex</taxon>
    </lineage>
</organism>
<feature type="signal peptide" evidence="2">
    <location>
        <begin position="1"/>
        <end position="33"/>
    </location>
</feature>
<feature type="chain" id="PRO_0000428433" description="Resuscitation-promoting factor RpfA">
    <location>
        <begin position="34"/>
        <end position="407"/>
    </location>
</feature>
<feature type="repeat" description="1">
    <location>
        <begin position="178"/>
        <end position="185"/>
    </location>
</feature>
<feature type="repeat" description="2">
    <location>
        <begin position="186"/>
        <end position="193"/>
    </location>
</feature>
<feature type="repeat" description="3">
    <location>
        <begin position="218"/>
        <end position="225"/>
    </location>
</feature>
<feature type="repeat" description="4">
    <location>
        <begin position="226"/>
        <end position="233"/>
    </location>
</feature>
<feature type="repeat" description="5">
    <location>
        <begin position="240"/>
        <end position="247"/>
    </location>
</feature>
<feature type="repeat" description="6">
    <location>
        <begin position="248"/>
        <end position="255"/>
    </location>
</feature>
<feature type="repeat" description="7">
    <location>
        <begin position="274"/>
        <end position="281"/>
    </location>
</feature>
<feature type="repeat" description="8">
    <location>
        <begin position="287"/>
        <end position="294"/>
    </location>
</feature>
<feature type="repeat" description="9">
    <location>
        <begin position="295"/>
        <end position="302"/>
    </location>
</feature>
<feature type="repeat" description="10">
    <location>
        <begin position="303"/>
        <end position="310"/>
    </location>
</feature>
<feature type="repeat" description="11">
    <location>
        <begin position="311"/>
        <end position="318"/>
    </location>
</feature>
<feature type="repeat" description="12">
    <location>
        <begin position="353"/>
        <end position="359"/>
    </location>
</feature>
<feature type="region of interest" description="Disordered" evidence="3">
    <location>
        <begin position="142"/>
        <end position="253"/>
    </location>
</feature>
<feature type="region of interest" description="12 X 8 AA approximate repeats of A-P-A-D-L-A-P-P">
    <location>
        <begin position="178"/>
        <end position="359"/>
    </location>
</feature>
<feature type="region of interest" description="Disordered" evidence="3">
    <location>
        <begin position="271"/>
        <end position="371"/>
    </location>
</feature>
<feature type="compositionally biased region" description="Pro residues" evidence="3">
    <location>
        <begin position="148"/>
        <end position="159"/>
    </location>
</feature>
<feature type="compositionally biased region" description="Low complexity" evidence="3">
    <location>
        <begin position="160"/>
        <end position="170"/>
    </location>
</feature>
<feature type="compositionally biased region" description="Pro residues" evidence="3">
    <location>
        <begin position="171"/>
        <end position="193"/>
    </location>
</feature>
<feature type="compositionally biased region" description="Low complexity" evidence="3">
    <location>
        <begin position="194"/>
        <end position="210"/>
    </location>
</feature>
<feature type="compositionally biased region" description="Pro residues" evidence="3">
    <location>
        <begin position="211"/>
        <end position="249"/>
    </location>
</feature>
<feature type="compositionally biased region" description="Low complexity" evidence="3">
    <location>
        <begin position="274"/>
        <end position="292"/>
    </location>
</feature>
<feature type="compositionally biased region" description="Pro residues" evidence="3">
    <location>
        <begin position="293"/>
        <end position="312"/>
    </location>
</feature>
<feature type="compositionally biased region" description="Pro residues" evidence="3">
    <location>
        <begin position="350"/>
        <end position="361"/>
    </location>
</feature>
<reference key="1">
    <citation type="journal article" date="2002" name="J. Bacteriol.">
        <title>Whole-genome comparison of Mycobacterium tuberculosis clinical and laboratory strains.</title>
        <authorList>
            <person name="Fleischmann R.D."/>
            <person name="Alland D."/>
            <person name="Eisen J.A."/>
            <person name="Carpenter L."/>
            <person name="White O."/>
            <person name="Peterson J.D."/>
            <person name="DeBoy R.T."/>
            <person name="Dodson R.J."/>
            <person name="Gwinn M.L."/>
            <person name="Haft D.H."/>
            <person name="Hickey E.K."/>
            <person name="Kolonay J.F."/>
            <person name="Nelson W.C."/>
            <person name="Umayam L.A."/>
            <person name="Ermolaeva M.D."/>
            <person name="Salzberg S.L."/>
            <person name="Delcher A."/>
            <person name="Utterback T.R."/>
            <person name="Weidman J.F."/>
            <person name="Khouri H.M."/>
            <person name="Gill J."/>
            <person name="Mikula A."/>
            <person name="Bishai W."/>
            <person name="Jacobs W.R. Jr."/>
            <person name="Venter J.C."/>
            <person name="Fraser C.M."/>
        </authorList>
    </citation>
    <scope>NUCLEOTIDE SEQUENCE [LARGE SCALE GENOMIC DNA]</scope>
    <source>
        <strain>CDC 1551 / Oshkosh</strain>
    </source>
</reference>
<gene>
    <name type="primary">rpfA</name>
    <name type="ordered locus">MT0890</name>
</gene>
<dbReference type="EC" id="3.-.-.-"/>
<dbReference type="EMBL" id="AE000516">
    <property type="protein sequence ID" value="AAK45131.1"/>
    <property type="molecule type" value="Genomic_DNA"/>
</dbReference>
<dbReference type="PIR" id="C70816">
    <property type="entry name" value="C70816"/>
</dbReference>
<dbReference type="RefSeq" id="WP_003900223.1">
    <property type="nucleotide sequence ID" value="NZ_KK341227.1"/>
</dbReference>
<dbReference type="SMR" id="P9WG30"/>
<dbReference type="CAZy" id="GH23">
    <property type="family name" value="Glycoside Hydrolase Family 23"/>
</dbReference>
<dbReference type="KEGG" id="mtc:MT0890"/>
<dbReference type="PATRIC" id="fig|83331.31.peg.955"/>
<dbReference type="HOGENOM" id="CLU_045108_2_1_11"/>
<dbReference type="Proteomes" id="UP000001020">
    <property type="component" value="Chromosome"/>
</dbReference>
<dbReference type="GO" id="GO:0005576">
    <property type="term" value="C:extracellular region"/>
    <property type="evidence" value="ECO:0007669"/>
    <property type="project" value="UniProtKB-ARBA"/>
</dbReference>
<dbReference type="GO" id="GO:0016787">
    <property type="term" value="F:hydrolase activity"/>
    <property type="evidence" value="ECO:0007669"/>
    <property type="project" value="UniProtKB-KW"/>
</dbReference>
<dbReference type="GO" id="GO:0010629">
    <property type="term" value="P:negative regulation of gene expression"/>
    <property type="evidence" value="ECO:0007669"/>
    <property type="project" value="UniProtKB-ARBA"/>
</dbReference>
<dbReference type="GO" id="GO:0009372">
    <property type="term" value="P:quorum sensing"/>
    <property type="evidence" value="ECO:0007669"/>
    <property type="project" value="UniProtKB-ARBA"/>
</dbReference>
<dbReference type="GO" id="GO:0042127">
    <property type="term" value="P:regulation of cell population proliferation"/>
    <property type="evidence" value="ECO:0007669"/>
    <property type="project" value="UniProtKB-ARBA"/>
</dbReference>
<dbReference type="CDD" id="cd13925">
    <property type="entry name" value="RPF"/>
    <property type="match status" value="1"/>
</dbReference>
<dbReference type="FunFam" id="1.10.530.10:FF:000029">
    <property type="entry name" value="Resuscitation-promoting factor RpfA"/>
    <property type="match status" value="1"/>
</dbReference>
<dbReference type="Gene3D" id="1.10.530.10">
    <property type="match status" value="1"/>
</dbReference>
<dbReference type="InterPro" id="IPR023346">
    <property type="entry name" value="Lysozyme-like_dom_sf"/>
</dbReference>
<dbReference type="InterPro" id="IPR010618">
    <property type="entry name" value="RPF"/>
</dbReference>
<dbReference type="Pfam" id="PF06737">
    <property type="entry name" value="Transglycosylas"/>
    <property type="match status" value="1"/>
</dbReference>
<dbReference type="SUPFAM" id="SSF53955">
    <property type="entry name" value="Lysozyme-like"/>
    <property type="match status" value="1"/>
</dbReference>
<name>RPFA_MYCTO</name>
<protein>
    <recommendedName>
        <fullName>Resuscitation-promoting factor RpfA</fullName>
        <ecNumber>3.-.-.-</ecNumber>
    </recommendedName>
</protein>
<sequence length="407" mass="39975">MSGRHRKPTTSNVSVAKIAFTGAVLGGGGIAMAAQATAATDGEWDQVARCESGGNWSINTGNGYLGGLQFTQSTWAAHGGGEFAPSAQLASREQQIAVGERVLATQGRGAWPVCGRGLSNATPREVLPASAAMDAPLDAAAVNGEPAPLAPPPADPAPPVELAANDLPAPLGEPLPAAPADPAPPADLAPPAPADVAPPVELAVNDLPAPLGEPLPAAPADPAPPADLAPPAPADLAPPAPADLAPPAPADLAPPVELAVNDLPAPLGEPLPAAPAELAPPADLAPASADLAPPAPADLAPPAPAELAPPAPADLAPPAAVNEQTAPGDQPATAPGGPVGLATDLELPEPDPQPADAPPPGDVTEAPAETPQVSNIAYTKKLWQAIRAQDVCGNDALDSLAQPYVIG</sequence>
<proteinExistence type="inferred from homology"/>
<accession>P9WG30</accession>
<accession>F2GIY6</accession>
<accession>L0T504</accession>
<accession>O53879</accession>
<accession>Q7D947</accession>